<feature type="chain" id="PRO_0000061922" description="Cytochrome bc1 complex cytochrome b subunit">
    <location>
        <begin position="1"/>
        <end position="540"/>
    </location>
</feature>
<feature type="transmembrane region" description="Helical" evidence="4">
    <location>
        <begin position="40"/>
        <end position="60"/>
    </location>
</feature>
<feature type="transmembrane region" description="Helical" evidence="4">
    <location>
        <begin position="109"/>
        <end position="129"/>
    </location>
</feature>
<feature type="transmembrane region" description="Helical" evidence="4">
    <location>
        <begin position="137"/>
        <end position="157"/>
    </location>
</feature>
<feature type="transmembrane region" description="Helical" evidence="4">
    <location>
        <begin position="169"/>
        <end position="189"/>
    </location>
</feature>
<feature type="transmembrane region" description="Helical" evidence="4">
    <location>
        <begin position="207"/>
        <end position="227"/>
    </location>
</feature>
<feature type="transmembrane region" description="Helical" evidence="4">
    <location>
        <begin position="259"/>
        <end position="279"/>
    </location>
</feature>
<feature type="transmembrane region" description="Helical" evidence="4">
    <location>
        <begin position="325"/>
        <end position="345"/>
    </location>
</feature>
<feature type="transmembrane region" description="Helical" evidence="4">
    <location>
        <begin position="371"/>
        <end position="391"/>
    </location>
</feature>
<feature type="transmembrane region" description="Helical" evidence="4">
    <location>
        <begin position="408"/>
        <end position="428"/>
    </location>
</feature>
<feature type="binding site" description="axial binding residue" evidence="4">
    <location>
        <position position="105"/>
    </location>
    <ligand>
        <name>heme</name>
        <dbReference type="ChEBI" id="CHEBI:30413"/>
        <label>1</label>
    </ligand>
    <ligandPart>
        <name>Fe</name>
        <dbReference type="ChEBI" id="CHEBI:18248"/>
    </ligandPart>
</feature>
<feature type="binding site" description="axial binding residue" evidence="4">
    <location>
        <position position="119"/>
    </location>
    <ligand>
        <name>heme</name>
        <dbReference type="ChEBI" id="CHEBI:30413"/>
        <label>2</label>
    </ligand>
    <ligandPart>
        <name>Fe</name>
        <dbReference type="ChEBI" id="CHEBI:18248"/>
    </ligandPart>
</feature>
<feature type="binding site" description="axial binding residue" evidence="4">
    <location>
        <position position="206"/>
    </location>
    <ligand>
        <name>heme</name>
        <dbReference type="ChEBI" id="CHEBI:30413"/>
        <label>1</label>
    </ligand>
    <ligandPart>
        <name>Fe</name>
        <dbReference type="ChEBI" id="CHEBI:18248"/>
    </ligandPart>
</feature>
<feature type="binding site" description="axial binding residue" evidence="4">
    <location>
        <position position="221"/>
    </location>
    <ligand>
        <name>heme</name>
        <dbReference type="ChEBI" id="CHEBI:30413"/>
        <label>2</label>
    </ligand>
    <ligandPart>
        <name>Fe</name>
        <dbReference type="ChEBI" id="CHEBI:18248"/>
    </ligandPart>
</feature>
<organism>
    <name type="scientific">Corynebacterium diphtheriae (strain ATCC 700971 / NCTC 13129 / Biotype gravis)</name>
    <dbReference type="NCBI Taxonomy" id="257309"/>
    <lineage>
        <taxon>Bacteria</taxon>
        <taxon>Bacillati</taxon>
        <taxon>Actinomycetota</taxon>
        <taxon>Actinomycetes</taxon>
        <taxon>Mycobacteriales</taxon>
        <taxon>Corynebacteriaceae</taxon>
        <taxon>Corynebacterium</taxon>
    </lineage>
</organism>
<comment type="function">
    <text evidence="2">Cytochrome b subunit of the cytochrome bc1 complex, an essential component of the respiratory electron transport chain required for ATP synthesis. The bc1 complex catalyzes the oxidation of menaquinol and the reduction of cytochrome c in the respiratory chain. The bc1 complex operates through a Q-cycle mechanism that couples electron transfer to generation of the proton gradient that drives ATP synthesis.</text>
</comment>
<comment type="catalytic activity">
    <reaction evidence="2">
        <text>a quinol + 2 Fe(III)-[cytochrome c](out) = a quinone + 2 Fe(II)-[cytochrome c](out) + 2 H(+)(out)</text>
        <dbReference type="Rhea" id="RHEA:11484"/>
        <dbReference type="Rhea" id="RHEA-COMP:10350"/>
        <dbReference type="Rhea" id="RHEA-COMP:14399"/>
        <dbReference type="ChEBI" id="CHEBI:15378"/>
        <dbReference type="ChEBI" id="CHEBI:24646"/>
        <dbReference type="ChEBI" id="CHEBI:29033"/>
        <dbReference type="ChEBI" id="CHEBI:29034"/>
        <dbReference type="ChEBI" id="CHEBI:132124"/>
        <dbReference type="EC" id="7.1.1.8"/>
    </reaction>
</comment>
<comment type="cofactor">
    <cofactor evidence="1">
        <name>heme</name>
        <dbReference type="ChEBI" id="CHEBI:30413"/>
    </cofactor>
    <text evidence="1">Binds 2 heme groups non-covalently per subunit.</text>
</comment>
<comment type="subunit">
    <text evidence="2">The cytochrome bc1 complex is composed of a cytochrome b (QcrB), the Rieske protein iron-sulfur (QcrA) and a diheme cytochrome c (QcrC) subunit.</text>
</comment>
<comment type="subcellular location">
    <subcellularLocation>
        <location evidence="3">Cell membrane</location>
        <topology evidence="3">Multi-pass membrane protein</topology>
    </subcellularLocation>
</comment>
<comment type="similarity">
    <text evidence="4">Belongs to the cytochrome b family.</text>
</comment>
<gene>
    <name type="primary">qcrB</name>
    <name type="synonym">cytB</name>
    <name type="ordered locus">DIP1624</name>
</gene>
<keyword id="KW-1003">Cell membrane</keyword>
<keyword id="KW-0249">Electron transport</keyword>
<keyword id="KW-0349">Heme</keyword>
<keyword id="KW-0408">Iron</keyword>
<keyword id="KW-0472">Membrane</keyword>
<keyword id="KW-0479">Metal-binding</keyword>
<keyword id="KW-1185">Reference proteome</keyword>
<keyword id="KW-0679">Respiratory chain</keyword>
<keyword id="KW-1278">Translocase</keyword>
<keyword id="KW-0812">Transmembrane</keyword>
<keyword id="KW-1133">Transmembrane helix</keyword>
<keyword id="KW-0813">Transport</keyword>
<proteinExistence type="inferred from homology"/>
<reference key="1">
    <citation type="journal article" date="2003" name="Nucleic Acids Res.">
        <title>The complete genome sequence and analysis of Corynebacterium diphtheriae NCTC13129.</title>
        <authorList>
            <person name="Cerdeno-Tarraga A.-M."/>
            <person name="Efstratiou A."/>
            <person name="Dover L.G."/>
            <person name="Holden M.T.G."/>
            <person name="Pallen M.J."/>
            <person name="Bentley S.D."/>
            <person name="Besra G.S."/>
            <person name="Churcher C.M."/>
            <person name="James K.D."/>
            <person name="De Zoysa A."/>
            <person name="Chillingworth T."/>
            <person name="Cronin A."/>
            <person name="Dowd L."/>
            <person name="Feltwell T."/>
            <person name="Hamlin N."/>
            <person name="Holroyd S."/>
            <person name="Jagels K."/>
            <person name="Moule S."/>
            <person name="Quail M.A."/>
            <person name="Rabbinowitsch E."/>
            <person name="Rutherford K.M."/>
            <person name="Thomson N.R."/>
            <person name="Unwin L."/>
            <person name="Whitehead S."/>
            <person name="Barrell B.G."/>
            <person name="Parkhill J."/>
        </authorList>
    </citation>
    <scope>NUCLEOTIDE SEQUENCE [LARGE SCALE GENOMIC DNA]</scope>
    <source>
        <strain>ATCC 700971 / NCTC 13129 / Biotype gravis</strain>
    </source>
</reference>
<dbReference type="EC" id="7.1.1.8" evidence="2"/>
<dbReference type="EMBL" id="BX248358">
    <property type="protein sequence ID" value="CAE50149.1"/>
    <property type="molecule type" value="Genomic_DNA"/>
</dbReference>
<dbReference type="RefSeq" id="WP_010935204.1">
    <property type="nucleotide sequence ID" value="NC_002935.2"/>
</dbReference>
<dbReference type="SMR" id="Q6NGA3"/>
<dbReference type="STRING" id="257309.DIP1624"/>
<dbReference type="KEGG" id="cdi:DIP1624"/>
<dbReference type="HOGENOM" id="CLU_031114_2_0_11"/>
<dbReference type="Proteomes" id="UP000002198">
    <property type="component" value="Chromosome"/>
</dbReference>
<dbReference type="GO" id="GO:0005886">
    <property type="term" value="C:plasma membrane"/>
    <property type="evidence" value="ECO:0007669"/>
    <property type="project" value="UniProtKB-SubCell"/>
</dbReference>
<dbReference type="GO" id="GO:0046872">
    <property type="term" value="F:metal ion binding"/>
    <property type="evidence" value="ECO:0007669"/>
    <property type="project" value="UniProtKB-KW"/>
</dbReference>
<dbReference type="GO" id="GO:0008121">
    <property type="term" value="F:ubiquinol-cytochrome-c reductase activity"/>
    <property type="evidence" value="ECO:0007669"/>
    <property type="project" value="UniProtKB-EC"/>
</dbReference>
<dbReference type="GO" id="GO:0022904">
    <property type="term" value="P:respiratory electron transport chain"/>
    <property type="evidence" value="ECO:0007669"/>
    <property type="project" value="InterPro"/>
</dbReference>
<dbReference type="FunFam" id="1.20.810.10:FF:000007">
    <property type="entry name" value="Ubiquinol-cytochrome C reductase B subunit"/>
    <property type="match status" value="1"/>
</dbReference>
<dbReference type="Gene3D" id="1.20.810.10">
    <property type="entry name" value="Cytochrome Bc1 Complex, Chain C"/>
    <property type="match status" value="1"/>
</dbReference>
<dbReference type="InterPro" id="IPR005797">
    <property type="entry name" value="Cyt_b/b6_N"/>
</dbReference>
<dbReference type="InterPro" id="IPR027387">
    <property type="entry name" value="Cytb/b6-like_sf"/>
</dbReference>
<dbReference type="InterPro" id="IPR016174">
    <property type="entry name" value="Di-haem_cyt_TM"/>
</dbReference>
<dbReference type="PANTHER" id="PTHR19271">
    <property type="entry name" value="CYTOCHROME B"/>
    <property type="match status" value="1"/>
</dbReference>
<dbReference type="PANTHER" id="PTHR19271:SF16">
    <property type="entry name" value="CYTOCHROME B"/>
    <property type="match status" value="1"/>
</dbReference>
<dbReference type="Pfam" id="PF13631">
    <property type="entry name" value="Cytochrom_B_N_2"/>
    <property type="match status" value="1"/>
</dbReference>
<dbReference type="SUPFAM" id="SSF81342">
    <property type="entry name" value="Transmembrane di-heme cytochromes"/>
    <property type="match status" value="1"/>
</dbReference>
<dbReference type="PROSITE" id="PS51002">
    <property type="entry name" value="CYTB_NTER"/>
    <property type="match status" value="1"/>
</dbReference>
<protein>
    <recommendedName>
        <fullName>Cytochrome bc1 complex cytochrome b subunit</fullName>
        <ecNumber evidence="2">7.1.1.8</ecNumber>
    </recommendedName>
    <alternativeName>
        <fullName>Cytochrome bc1 reductase complex subunit QcrB</fullName>
    </alternativeName>
    <alternativeName>
        <fullName>Menaquinol--cytochrome c reductase cytochrome b subunit</fullName>
    </alternativeName>
</protein>
<sequence length="540" mass="59878">MSNKLAEIGNNIDSRYTAASGIRRQINKVFPTHWSFMLGEIALYSFIILLLTGVYLTLFFDPSITKVIYDGAYLPLNGVEMSRAYETALNLSFEVRGGLFIRQMHHWAALTFMVSMTVHMLRIFFTGAFRRPREANWIIGCVLLFLGMAEGFMGYSLPDDLLSGVGLRIMSAIILALPIIGTWLHWLIFGGDFPSDLMLDRFYIAHVLIIPGIILGLIAAHLALVWYQKHTQFPGAGRTENNVVGVRILPVFILETSSFGLVTFGVLALLAGLTSINAIWNLGPYNPSQVSAGSQPDIYMLWTDGAARVMPAWELYIGSYTIPGAFWVALLCGVLVGLLVGYPFIEKKITGDDAHHNLLQRPRDVPVRTSLGVMAIVFYFLLTLSGGNDLFAYHFEVSLNAMTWVGRIGLIVLPPLAYFITYRICLGLQRSDREVLEHGIETGVIKIMPNGAFVEVHQPLGPVDEHGHPVPLPYAGAPVPKQLNDLGFGGEPGRGGYFTPDNDSLAAKYAEIEHENHLEEMAMYKNLQKNNRAQDGVEED</sequence>
<accession>Q6NGA3</accession>
<name>QCRB_CORDI</name>
<evidence type="ECO:0000250" key="1">
    <source>
        <dbReference type="UniProtKB" id="P00163"/>
    </source>
</evidence>
<evidence type="ECO:0000250" key="2">
    <source>
        <dbReference type="UniProtKB" id="Q79VE9"/>
    </source>
</evidence>
<evidence type="ECO:0000255" key="3"/>
<evidence type="ECO:0000255" key="4">
    <source>
        <dbReference type="PROSITE-ProRule" id="PRU00968"/>
    </source>
</evidence>